<proteinExistence type="inferred from homology"/>
<accession>Q9L5W4</accession>
<name>RL7_LIBAC</name>
<organism>
    <name type="scientific">Liberibacter africanus subsp. capensis</name>
    <dbReference type="NCBI Taxonomy" id="119494"/>
    <lineage>
        <taxon>Bacteria</taxon>
        <taxon>Pseudomonadati</taxon>
        <taxon>Pseudomonadota</taxon>
        <taxon>Alphaproteobacteria</taxon>
        <taxon>Hyphomicrobiales</taxon>
        <taxon>Rhizobiaceae</taxon>
        <taxon>Liberibacter</taxon>
    </lineage>
</organism>
<keyword id="KW-0687">Ribonucleoprotein</keyword>
<keyword id="KW-0689">Ribosomal protein</keyword>
<sequence>MSDIESIVEKLSSLTLIQAAELSKRLEEEWGVSASAPVAAVAPAVXXDVAVAEKTEFEVFLESFDAKSKISVIKEVRSITDLGLKEAKELVEALLKSLRTGVSKDEANELKKKLEAAGATISLR</sequence>
<gene>
    <name evidence="1" type="primary">rplL</name>
</gene>
<dbReference type="EMBL" id="AF248498">
    <property type="protein sequence ID" value="AAF68453.1"/>
    <property type="molecule type" value="Genomic_DNA"/>
</dbReference>
<dbReference type="GO" id="GO:0005737">
    <property type="term" value="C:cytoplasm"/>
    <property type="evidence" value="ECO:0007669"/>
    <property type="project" value="UniProtKB-ARBA"/>
</dbReference>
<dbReference type="GO" id="GO:1990904">
    <property type="term" value="C:ribonucleoprotein complex"/>
    <property type="evidence" value="ECO:0007669"/>
    <property type="project" value="UniProtKB-KW"/>
</dbReference>
<dbReference type="GO" id="GO:0005840">
    <property type="term" value="C:ribosome"/>
    <property type="evidence" value="ECO:0007669"/>
    <property type="project" value="UniProtKB-KW"/>
</dbReference>
<dbReference type="GO" id="GO:0003729">
    <property type="term" value="F:mRNA binding"/>
    <property type="evidence" value="ECO:0007669"/>
    <property type="project" value="TreeGrafter"/>
</dbReference>
<dbReference type="GO" id="GO:0003735">
    <property type="term" value="F:structural constituent of ribosome"/>
    <property type="evidence" value="ECO:0007669"/>
    <property type="project" value="InterPro"/>
</dbReference>
<dbReference type="GO" id="GO:0006412">
    <property type="term" value="P:translation"/>
    <property type="evidence" value="ECO:0007669"/>
    <property type="project" value="UniProtKB-UniRule"/>
</dbReference>
<dbReference type="CDD" id="cd00387">
    <property type="entry name" value="Ribosomal_L7_L12"/>
    <property type="match status" value="1"/>
</dbReference>
<dbReference type="FunFam" id="3.30.1390.10:FF:000001">
    <property type="entry name" value="50S ribosomal protein L7/L12"/>
    <property type="match status" value="1"/>
</dbReference>
<dbReference type="Gene3D" id="3.30.1390.10">
    <property type="match status" value="1"/>
</dbReference>
<dbReference type="Gene3D" id="1.20.5.710">
    <property type="entry name" value="Single helix bin"/>
    <property type="match status" value="1"/>
</dbReference>
<dbReference type="HAMAP" id="MF_00368">
    <property type="entry name" value="Ribosomal_bL12"/>
    <property type="match status" value="1"/>
</dbReference>
<dbReference type="InterPro" id="IPR000206">
    <property type="entry name" value="Ribosomal_bL12"/>
</dbReference>
<dbReference type="InterPro" id="IPR013823">
    <property type="entry name" value="Ribosomal_bL12_C"/>
</dbReference>
<dbReference type="InterPro" id="IPR014719">
    <property type="entry name" value="Ribosomal_bL12_C/ClpS-like"/>
</dbReference>
<dbReference type="InterPro" id="IPR008932">
    <property type="entry name" value="Ribosomal_bL12_oligo"/>
</dbReference>
<dbReference type="InterPro" id="IPR036235">
    <property type="entry name" value="Ribosomal_bL12_oligo_N_sf"/>
</dbReference>
<dbReference type="NCBIfam" id="TIGR00855">
    <property type="entry name" value="L12"/>
    <property type="match status" value="1"/>
</dbReference>
<dbReference type="PANTHER" id="PTHR45987">
    <property type="entry name" value="39S RIBOSOMAL PROTEIN L12"/>
    <property type="match status" value="1"/>
</dbReference>
<dbReference type="PANTHER" id="PTHR45987:SF4">
    <property type="entry name" value="LARGE RIBOSOMAL SUBUNIT PROTEIN BL12M"/>
    <property type="match status" value="1"/>
</dbReference>
<dbReference type="Pfam" id="PF00542">
    <property type="entry name" value="Ribosomal_L12"/>
    <property type="match status" value="1"/>
</dbReference>
<dbReference type="Pfam" id="PF16320">
    <property type="entry name" value="Ribosomal_L12_N"/>
    <property type="match status" value="1"/>
</dbReference>
<dbReference type="SUPFAM" id="SSF54736">
    <property type="entry name" value="ClpS-like"/>
    <property type="match status" value="1"/>
</dbReference>
<dbReference type="SUPFAM" id="SSF48300">
    <property type="entry name" value="Ribosomal protein L7/12, oligomerisation (N-terminal) domain"/>
    <property type="match status" value="1"/>
</dbReference>
<protein>
    <recommendedName>
        <fullName evidence="1">Large ribosomal subunit protein bL12</fullName>
    </recommendedName>
    <alternativeName>
        <fullName evidence="2">50S ribosomal protein L7/L12</fullName>
    </alternativeName>
</protein>
<evidence type="ECO:0000255" key="1">
    <source>
        <dbReference type="HAMAP-Rule" id="MF_00368"/>
    </source>
</evidence>
<evidence type="ECO:0000305" key="2"/>
<comment type="function">
    <text evidence="1">Forms part of the ribosomal stalk which helps the ribosome interact with GTP-bound translation factors. Is thus essential for accurate translation.</text>
</comment>
<comment type="subunit">
    <text evidence="1">Homodimer. Part of the ribosomal stalk of the 50S ribosomal subunit. Forms a multimeric L10(L12)X complex, where L10 forms an elongated spine to which 2 to 4 L12 dimers bind in a sequential fashion. Binds GTP-bound translation factors.</text>
</comment>
<comment type="similarity">
    <text evidence="1">Belongs to the bacterial ribosomal protein bL12 family.</text>
</comment>
<feature type="chain" id="PRO_0000157542" description="Large ribosomal subunit protein bL12">
    <location>
        <begin position="1"/>
        <end position="124"/>
    </location>
</feature>
<reference key="1">
    <citation type="journal article" date="2000" name="Int. J. Syst. Evol. Microbiol.">
        <title>Genomic characterization of a liberibacter present in an ornamental rutaceous tree, Calodendrum capense, in the Western Cape Province of South Africa. Proposal of 'Candidatus Liberibacter africanus subsp. capensis'.</title>
        <authorList>
            <person name="Garnier M."/>
            <person name="Jagoueix-Eveillard S."/>
            <person name="Cronje P.R."/>
            <person name="Le Roux H.F."/>
            <person name="Bove J.M."/>
        </authorList>
    </citation>
    <scope>NUCLEOTIDE SEQUENCE [GENOMIC DNA]</scope>
</reference>